<protein>
    <recommendedName>
        <fullName evidence="1">NAD(P)H-quinone oxidoreductase subunit 4L, chloroplastic</fullName>
        <ecNumber evidence="1">7.1.1.-</ecNumber>
    </recommendedName>
    <alternativeName>
        <fullName evidence="1">NAD(P)H dehydrogenase subunit 4L</fullName>
    </alternativeName>
    <alternativeName>
        <fullName evidence="1">NADH-plastoquinone oxidoreductase subunit 4L</fullName>
    </alternativeName>
</protein>
<sequence length="101" mass="11251">MIFEHALVLSAFLFSIGIYGLITSRNMVRALMCLELILNAVNINLVTFSDFFDRRQLKGNIFSIFVIAVAAAEAAIGPAIVSSIYRNRKSTRINQSNLLNK</sequence>
<gene>
    <name evidence="1" type="primary">ndhE</name>
</gene>
<reference key="1">
    <citation type="journal article" date="2007" name="BMC Genomics">
        <title>Rapid evolutionary change of common bean (Phaseolus vulgaris L) plastome, and the genomic diversification of legume chloroplasts.</title>
        <authorList>
            <person name="Guo X."/>
            <person name="Castillo-Ramirez S."/>
            <person name="Gonzalez V."/>
            <person name="Bustos P."/>
            <person name="Fernandez-Vazquez J.L."/>
            <person name="Santamaria R.I."/>
            <person name="Arellano J."/>
            <person name="Cevallos M.A."/>
            <person name="Davila G."/>
        </authorList>
    </citation>
    <scope>NUCLEOTIDE SEQUENCE [LARGE SCALE GENOMIC DNA]</scope>
    <source>
        <strain>cv. Negro Jamapa</strain>
    </source>
</reference>
<reference key="2">
    <citation type="submission" date="2007-10" db="EMBL/GenBank/DDBJ databases">
        <title>Complete nucleotide sequence of the plastid genome of the common bean, Phaseolus vulgaris.</title>
        <authorList>
            <person name="Moore M.J."/>
            <person name="Triplett E.W."/>
            <person name="Broughton W.J."/>
            <person name="Soltis P.S."/>
            <person name="Soltis D.E."/>
        </authorList>
    </citation>
    <scope>NUCLEOTIDE SEQUENCE [LARGE SCALE GENOMIC DNA]</scope>
</reference>
<feature type="chain" id="PRO_0000360359" description="NAD(P)H-quinone oxidoreductase subunit 4L, chloroplastic">
    <location>
        <begin position="1"/>
        <end position="101"/>
    </location>
</feature>
<feature type="transmembrane region" description="Helical" evidence="1">
    <location>
        <begin position="2"/>
        <end position="22"/>
    </location>
</feature>
<feature type="transmembrane region" description="Helical" evidence="1">
    <location>
        <begin position="32"/>
        <end position="52"/>
    </location>
</feature>
<feature type="transmembrane region" description="Helical" evidence="1">
    <location>
        <begin position="61"/>
        <end position="81"/>
    </location>
</feature>
<organism>
    <name type="scientific">Phaseolus vulgaris</name>
    <name type="common">Kidney bean</name>
    <name type="synonym">French bean</name>
    <dbReference type="NCBI Taxonomy" id="3885"/>
    <lineage>
        <taxon>Eukaryota</taxon>
        <taxon>Viridiplantae</taxon>
        <taxon>Streptophyta</taxon>
        <taxon>Embryophyta</taxon>
        <taxon>Tracheophyta</taxon>
        <taxon>Spermatophyta</taxon>
        <taxon>Magnoliopsida</taxon>
        <taxon>eudicotyledons</taxon>
        <taxon>Gunneridae</taxon>
        <taxon>Pentapetalae</taxon>
        <taxon>rosids</taxon>
        <taxon>fabids</taxon>
        <taxon>Fabales</taxon>
        <taxon>Fabaceae</taxon>
        <taxon>Papilionoideae</taxon>
        <taxon>50 kb inversion clade</taxon>
        <taxon>NPAAA clade</taxon>
        <taxon>indigoferoid/millettioid clade</taxon>
        <taxon>Phaseoleae</taxon>
        <taxon>Phaseolus</taxon>
    </lineage>
</organism>
<accession>A4GGE8</accession>
<dbReference type="EC" id="7.1.1.-" evidence="1"/>
<dbReference type="EMBL" id="DQ886273">
    <property type="protein sequence ID" value="ABH88130.1"/>
    <property type="molecule type" value="Genomic_DNA"/>
</dbReference>
<dbReference type="EMBL" id="EU196765">
    <property type="protein sequence ID" value="ABW22816.1"/>
    <property type="molecule type" value="Genomic_DNA"/>
</dbReference>
<dbReference type="RefSeq" id="YP_001122849.1">
    <property type="nucleotide sequence ID" value="NC_009259.1"/>
</dbReference>
<dbReference type="SMR" id="A4GGE8"/>
<dbReference type="GeneID" id="4961802"/>
<dbReference type="KEGG" id="pvu:4961802"/>
<dbReference type="PhylomeDB" id="A4GGE8"/>
<dbReference type="GO" id="GO:0009535">
    <property type="term" value="C:chloroplast thylakoid membrane"/>
    <property type="evidence" value="ECO:0007669"/>
    <property type="project" value="UniProtKB-SubCell"/>
</dbReference>
<dbReference type="GO" id="GO:0030964">
    <property type="term" value="C:NADH dehydrogenase complex"/>
    <property type="evidence" value="ECO:0007669"/>
    <property type="project" value="TreeGrafter"/>
</dbReference>
<dbReference type="GO" id="GO:0016655">
    <property type="term" value="F:oxidoreductase activity, acting on NAD(P)H, quinone or similar compound as acceptor"/>
    <property type="evidence" value="ECO:0007669"/>
    <property type="project" value="UniProtKB-UniRule"/>
</dbReference>
<dbReference type="GO" id="GO:0048038">
    <property type="term" value="F:quinone binding"/>
    <property type="evidence" value="ECO:0007669"/>
    <property type="project" value="UniProtKB-KW"/>
</dbReference>
<dbReference type="GO" id="GO:0042773">
    <property type="term" value="P:ATP synthesis coupled electron transport"/>
    <property type="evidence" value="ECO:0007669"/>
    <property type="project" value="InterPro"/>
</dbReference>
<dbReference type="GO" id="GO:0019684">
    <property type="term" value="P:photosynthesis, light reaction"/>
    <property type="evidence" value="ECO:0007669"/>
    <property type="project" value="UniProtKB-UniRule"/>
</dbReference>
<dbReference type="FunFam" id="1.10.287.3510:FF:000001">
    <property type="entry name" value="NADH-quinone oxidoreductase subunit K"/>
    <property type="match status" value="1"/>
</dbReference>
<dbReference type="Gene3D" id="1.10.287.3510">
    <property type="match status" value="1"/>
</dbReference>
<dbReference type="HAMAP" id="MF_01456">
    <property type="entry name" value="NDH1_NuoK"/>
    <property type="match status" value="1"/>
</dbReference>
<dbReference type="InterPro" id="IPR001133">
    <property type="entry name" value="NADH_UbQ_OxRdtase_chain4L/K"/>
</dbReference>
<dbReference type="InterPro" id="IPR039428">
    <property type="entry name" value="NUOK/Mnh_C1-like"/>
</dbReference>
<dbReference type="NCBIfam" id="NF004320">
    <property type="entry name" value="PRK05715.1-2"/>
    <property type="match status" value="1"/>
</dbReference>
<dbReference type="NCBIfam" id="NF004322">
    <property type="entry name" value="PRK05715.1-4"/>
    <property type="match status" value="1"/>
</dbReference>
<dbReference type="NCBIfam" id="NF004323">
    <property type="entry name" value="PRK05715.1-5"/>
    <property type="match status" value="1"/>
</dbReference>
<dbReference type="PANTHER" id="PTHR11434:SF16">
    <property type="entry name" value="NADH-UBIQUINONE OXIDOREDUCTASE CHAIN 4L"/>
    <property type="match status" value="1"/>
</dbReference>
<dbReference type="PANTHER" id="PTHR11434">
    <property type="entry name" value="NADH-UBIQUINONE OXIDOREDUCTASE SUBUNIT ND4L"/>
    <property type="match status" value="1"/>
</dbReference>
<dbReference type="Pfam" id="PF00420">
    <property type="entry name" value="Oxidored_q2"/>
    <property type="match status" value="1"/>
</dbReference>
<evidence type="ECO:0000255" key="1">
    <source>
        <dbReference type="HAMAP-Rule" id="MF_01456"/>
    </source>
</evidence>
<comment type="function">
    <text evidence="1">NDH shuttles electrons from NAD(P)H:plastoquinone, via FMN and iron-sulfur (Fe-S) centers, to quinones in the photosynthetic chain and possibly in a chloroplast respiratory chain. The immediate electron acceptor for the enzyme in this species is believed to be plastoquinone. Couples the redox reaction to proton translocation, and thus conserves the redox energy in a proton gradient.</text>
</comment>
<comment type="catalytic activity">
    <reaction evidence="1">
        <text>a plastoquinone + NADH + (n+1) H(+)(in) = a plastoquinol + NAD(+) + n H(+)(out)</text>
        <dbReference type="Rhea" id="RHEA:42608"/>
        <dbReference type="Rhea" id="RHEA-COMP:9561"/>
        <dbReference type="Rhea" id="RHEA-COMP:9562"/>
        <dbReference type="ChEBI" id="CHEBI:15378"/>
        <dbReference type="ChEBI" id="CHEBI:17757"/>
        <dbReference type="ChEBI" id="CHEBI:57540"/>
        <dbReference type="ChEBI" id="CHEBI:57945"/>
        <dbReference type="ChEBI" id="CHEBI:62192"/>
    </reaction>
</comment>
<comment type="catalytic activity">
    <reaction evidence="1">
        <text>a plastoquinone + NADPH + (n+1) H(+)(in) = a plastoquinol + NADP(+) + n H(+)(out)</text>
        <dbReference type="Rhea" id="RHEA:42612"/>
        <dbReference type="Rhea" id="RHEA-COMP:9561"/>
        <dbReference type="Rhea" id="RHEA-COMP:9562"/>
        <dbReference type="ChEBI" id="CHEBI:15378"/>
        <dbReference type="ChEBI" id="CHEBI:17757"/>
        <dbReference type="ChEBI" id="CHEBI:57783"/>
        <dbReference type="ChEBI" id="CHEBI:58349"/>
        <dbReference type="ChEBI" id="CHEBI:62192"/>
    </reaction>
</comment>
<comment type="subunit">
    <text evidence="1">NDH is composed of at least 16 different subunits, 5 of which are encoded in the nucleus.</text>
</comment>
<comment type="subcellular location">
    <subcellularLocation>
        <location evidence="1">Plastid</location>
        <location evidence="1">Chloroplast thylakoid membrane</location>
        <topology evidence="1">Multi-pass membrane protein</topology>
    </subcellularLocation>
</comment>
<comment type="similarity">
    <text evidence="1">Belongs to the complex I subunit 4L family.</text>
</comment>
<keyword id="KW-0150">Chloroplast</keyword>
<keyword id="KW-0472">Membrane</keyword>
<keyword id="KW-0520">NAD</keyword>
<keyword id="KW-0521">NADP</keyword>
<keyword id="KW-0934">Plastid</keyword>
<keyword id="KW-0618">Plastoquinone</keyword>
<keyword id="KW-0874">Quinone</keyword>
<keyword id="KW-0793">Thylakoid</keyword>
<keyword id="KW-1278">Translocase</keyword>
<keyword id="KW-0812">Transmembrane</keyword>
<keyword id="KW-1133">Transmembrane helix</keyword>
<keyword id="KW-0813">Transport</keyword>
<name>NU4LC_PHAVU</name>
<proteinExistence type="inferred from homology"/>
<geneLocation type="chloroplast"/>